<comment type="catalytic activity">
    <reaction>
        <text>S-adenosyl-L-methionine + H(+) = S-adenosyl 3-(methylsulfanyl)propylamine + CO2</text>
        <dbReference type="Rhea" id="RHEA:15981"/>
        <dbReference type="ChEBI" id="CHEBI:15378"/>
        <dbReference type="ChEBI" id="CHEBI:16526"/>
        <dbReference type="ChEBI" id="CHEBI:57443"/>
        <dbReference type="ChEBI" id="CHEBI:59789"/>
        <dbReference type="EC" id="4.1.1.50"/>
    </reaction>
</comment>
<comment type="cofactor">
    <cofactor evidence="1">
        <name>pyruvate</name>
        <dbReference type="ChEBI" id="CHEBI:15361"/>
    </cofactor>
    <text evidence="1">Binds 1 pyruvoyl group covalently per subunit.</text>
</comment>
<comment type="pathway">
    <text>Amine and polyamine biosynthesis; S-adenosylmethioninamine biosynthesis; S-adenosylmethioninamine from S-adenosyl-L-methionine: step 1/1.</text>
</comment>
<comment type="PTM">
    <text evidence="1">Is synthesized initially as an inactive proenzyme. Formation of the active enzyme involves a self-maturation process in which the active site pyruvoyl group is generated from an internal serine residue via an autocatalytic post-translational modification. Two non-identical subunits are generated from the proenzyme in this reaction, and the pyruvate is formed at the N-terminus of the alpha chain, which is derived from the carboxyl end of the proenzyme. The post-translation cleavage follows an unusual pathway, termed non-hydrolytic serinolysis, in which the side chain hydroxyl group of the serine supplies its oxygen atom to form the C-terminus of the beta chain, while the remainder of the serine residue undergoes an oxidative deamination to produce ammonia and the pyruvoyl group blocking the N-terminus of the alpha chain (By similarity).</text>
</comment>
<comment type="similarity">
    <text evidence="2">Belongs to the eukaryotic AdoMetDC family.</text>
</comment>
<protein>
    <recommendedName>
        <fullName>S-adenosylmethionine decarboxylase proenzyme</fullName>
        <shortName>AdoMetDC</shortName>
        <shortName>SAMDC</shortName>
        <ecNumber>4.1.1.50</ecNumber>
    </recommendedName>
    <component>
        <recommendedName>
            <fullName>S-adenosylmethionine decarboxylase alpha chain</fullName>
        </recommendedName>
    </component>
    <component>
        <recommendedName>
            <fullName>S-adenosylmethionine decarboxylase beta chain</fullName>
        </recommendedName>
    </component>
</protein>
<keyword id="KW-0068">Autocatalytic cleavage</keyword>
<keyword id="KW-0210">Decarboxylase</keyword>
<keyword id="KW-0456">Lyase</keyword>
<keyword id="KW-0620">Polyamine biosynthesis</keyword>
<keyword id="KW-0670">Pyruvate</keyword>
<keyword id="KW-0949">S-adenosyl-L-methionine</keyword>
<keyword id="KW-0704">Schiff base</keyword>
<keyword id="KW-0745">Spermidine biosynthesis</keyword>
<keyword id="KW-0865">Zymogen</keyword>
<reference key="1">
    <citation type="submission" date="2005-09" db="EMBL/GenBank/DDBJ databases">
        <title>Identification of differentially expressed genes during salt stress in leaves of Lycopersicon chilense.</title>
        <authorList>
            <person name="Yanez M.L."/>
            <person name="Ruiz-Lara S.A."/>
        </authorList>
    </citation>
    <scope>NUCLEOTIDE SEQUENCE [MRNA]</scope>
</reference>
<organism>
    <name type="scientific">Solanum chilense</name>
    <name type="common">Tomato</name>
    <name type="synonym">Lycopersicon chilense</name>
    <dbReference type="NCBI Taxonomy" id="4083"/>
    <lineage>
        <taxon>Eukaryota</taxon>
        <taxon>Viridiplantae</taxon>
        <taxon>Streptophyta</taxon>
        <taxon>Embryophyta</taxon>
        <taxon>Tracheophyta</taxon>
        <taxon>Spermatophyta</taxon>
        <taxon>Magnoliopsida</taxon>
        <taxon>eudicotyledons</taxon>
        <taxon>Gunneridae</taxon>
        <taxon>Pentapetalae</taxon>
        <taxon>asterids</taxon>
        <taxon>lamiids</taxon>
        <taxon>Solanales</taxon>
        <taxon>Solanaceae</taxon>
        <taxon>Solanoideae</taxon>
        <taxon>Solaneae</taxon>
        <taxon>Solanum</taxon>
        <taxon>Solanum subgen. Lycopersicon</taxon>
    </lineage>
</organism>
<feature type="chain" id="PRO_0000252660" description="S-adenosylmethionine decarboxylase beta chain" evidence="1">
    <location>
        <begin position="1"/>
        <end position="70"/>
    </location>
</feature>
<feature type="chain" id="PRO_0000252661" description="S-adenosylmethionine decarboxylase alpha chain" evidence="1">
    <location>
        <begin position="71"/>
        <end position="358"/>
    </location>
</feature>
<feature type="active site" evidence="1">
    <location>
        <position position="11"/>
    </location>
</feature>
<feature type="active site" evidence="1">
    <location>
        <position position="14"/>
    </location>
</feature>
<feature type="active site" description="Schiff-base intermediate with substrate; via pyruvic acid" evidence="1">
    <location>
        <position position="71"/>
    </location>
</feature>
<feature type="active site" description="Proton donor; for catalytic activity" evidence="1">
    <location>
        <position position="85"/>
    </location>
</feature>
<feature type="active site" description="Proton acceptor; for processing activity" evidence="1">
    <location>
        <position position="234"/>
    </location>
</feature>
<feature type="active site" description="Proton acceptor; for processing activity" evidence="1">
    <location>
        <position position="247"/>
    </location>
</feature>
<feature type="site" description="Cleavage (non-hydrolytic); by autolysis" evidence="1">
    <location>
        <begin position="70"/>
        <end position="71"/>
    </location>
</feature>
<feature type="modified residue" description="Pyruvic acid (Ser); by autocatalysis" evidence="1">
    <location>
        <position position="71"/>
    </location>
</feature>
<gene>
    <name type="primary">SAMDC</name>
</gene>
<accession>Q38IY3</accession>
<dbReference type="EC" id="4.1.1.50"/>
<dbReference type="EMBL" id="DQ224276">
    <property type="protein sequence ID" value="ABB02530.1"/>
    <property type="molecule type" value="mRNA"/>
</dbReference>
<dbReference type="SMR" id="Q38IY3"/>
<dbReference type="UniPathway" id="UPA00331">
    <property type="reaction ID" value="UER00451"/>
</dbReference>
<dbReference type="GO" id="GO:0005829">
    <property type="term" value="C:cytosol"/>
    <property type="evidence" value="ECO:0007669"/>
    <property type="project" value="TreeGrafter"/>
</dbReference>
<dbReference type="GO" id="GO:0004014">
    <property type="term" value="F:adenosylmethionine decarboxylase activity"/>
    <property type="evidence" value="ECO:0007669"/>
    <property type="project" value="UniProtKB-EC"/>
</dbReference>
<dbReference type="GO" id="GO:0008295">
    <property type="term" value="P:spermidine biosynthetic process"/>
    <property type="evidence" value="ECO:0007669"/>
    <property type="project" value="UniProtKB-KW"/>
</dbReference>
<dbReference type="GO" id="GO:0006597">
    <property type="term" value="P:spermine biosynthetic process"/>
    <property type="evidence" value="ECO:0007669"/>
    <property type="project" value="InterPro"/>
</dbReference>
<dbReference type="FunFam" id="3.30.360.50:FF:000001">
    <property type="entry name" value="S-adenosylmethionine decarboxylase proenzyme"/>
    <property type="match status" value="1"/>
</dbReference>
<dbReference type="FunFam" id="3.60.90.10:FF:000002">
    <property type="entry name" value="S-adenosylmethionine decarboxylase proenzyme"/>
    <property type="match status" value="1"/>
</dbReference>
<dbReference type="Gene3D" id="3.30.360.50">
    <property type="entry name" value="S-adenosylmethionine decarboxylase"/>
    <property type="match status" value="1"/>
</dbReference>
<dbReference type="Gene3D" id="3.60.90.10">
    <property type="entry name" value="S-adenosylmethionine decarboxylase"/>
    <property type="match status" value="1"/>
</dbReference>
<dbReference type="InterPro" id="IPR048283">
    <property type="entry name" value="AdoMetDC-like"/>
</dbReference>
<dbReference type="InterPro" id="IPR001985">
    <property type="entry name" value="S-AdoMet_decarboxylase_euk"/>
</dbReference>
<dbReference type="InterPro" id="IPR016067">
    <property type="entry name" value="S-AdoMet_deCO2ase_core"/>
</dbReference>
<dbReference type="InterPro" id="IPR018166">
    <property type="entry name" value="S-AdoMet_deCO2ase_CS"/>
</dbReference>
<dbReference type="NCBIfam" id="TIGR00535">
    <property type="entry name" value="SAM_DCase"/>
    <property type="match status" value="1"/>
</dbReference>
<dbReference type="PANTHER" id="PTHR11570">
    <property type="entry name" value="S-ADENOSYLMETHIONINE DECARBOXYLASE"/>
    <property type="match status" value="1"/>
</dbReference>
<dbReference type="PANTHER" id="PTHR11570:SF15">
    <property type="entry name" value="S-ADENOSYLMETHIONINE DECARBOXYLASE PROENZYME 3"/>
    <property type="match status" value="1"/>
</dbReference>
<dbReference type="Pfam" id="PF01536">
    <property type="entry name" value="SAM_decarbox"/>
    <property type="match status" value="1"/>
</dbReference>
<dbReference type="PIRSF" id="PIRSF001355">
    <property type="entry name" value="S-AdenosylMet_decarboxylase"/>
    <property type="match status" value="1"/>
</dbReference>
<dbReference type="SUPFAM" id="SSF56276">
    <property type="entry name" value="S-adenosylmethionine decarboxylase"/>
    <property type="match status" value="1"/>
</dbReference>
<dbReference type="PROSITE" id="PS01336">
    <property type="entry name" value="ADOMETDC"/>
    <property type="match status" value="1"/>
</dbReference>
<sequence length="358" mass="39595">MDLPVSAIGFEGFEKRLEISFVEPGLFADPNGKGLRSLTKAQLDEILGPAECTIVDNLSNDYVDSYVLSESSLFVYSYKIIIKTCGTTKLLLAIPPILRLAETLSLKVQDVRYTRGSFIFPGAQSFPHRHFSEEVAVLDGYFGKLAAGSKAVIMGNPDKTQKWHVYSASAGTVQCNDPVYTLEMCMAGLDREKASVFYKTEESSAAHMTVRSGIRKILPKFEICDFEFEPCGYSMNSIEGAAVSTIHITPEDGFSYASFESVGYDPKTTELGPLVERVLACFEPAEFSIALHADVATKLLERVCSVDVKGYSLAEWSPEEFGKGGSIVYQKFTRTPYCESPKSVLKGCWKEEEKEEKE</sequence>
<proteinExistence type="evidence at transcript level"/>
<name>DCAM_SOLCI</name>
<evidence type="ECO:0000250" key="1"/>
<evidence type="ECO:0000305" key="2"/>